<keyword id="KW-0131">Cell cycle</keyword>
<keyword id="KW-0132">Cell division</keyword>
<keyword id="KW-0133">Cell shape</keyword>
<keyword id="KW-0175">Coiled coil</keyword>
<keyword id="KW-0963">Cytoplasm</keyword>
<organism>
    <name type="scientific">Bacillus cereus (strain Q1)</name>
    <dbReference type="NCBI Taxonomy" id="361100"/>
    <lineage>
        <taxon>Bacteria</taxon>
        <taxon>Bacillati</taxon>
        <taxon>Bacillota</taxon>
        <taxon>Bacilli</taxon>
        <taxon>Bacillales</taxon>
        <taxon>Bacillaceae</taxon>
        <taxon>Bacillus</taxon>
        <taxon>Bacillus cereus group</taxon>
    </lineage>
</organism>
<sequence>MISDKIKLTAKDILEKEFKTGMRGYQQEEVDKFLDMIIKDYEAFHKEFEQLKQQNARLKRELEEQKLAATQVPQQPVVQTPVAQPVYNNTNTDILKRLSNLEKAVFGSKLYE</sequence>
<evidence type="ECO:0000255" key="1">
    <source>
        <dbReference type="HAMAP-Rule" id="MF_02011"/>
    </source>
</evidence>
<dbReference type="EMBL" id="CP000227">
    <property type="protein sequence ID" value="ACM12056.1"/>
    <property type="molecule type" value="Genomic_DNA"/>
</dbReference>
<dbReference type="SMR" id="B9IVT1"/>
<dbReference type="KEGG" id="bcq:BCQ_1628"/>
<dbReference type="HOGENOM" id="CLU_140309_1_0_9"/>
<dbReference type="Proteomes" id="UP000000441">
    <property type="component" value="Chromosome"/>
</dbReference>
<dbReference type="GO" id="GO:0005737">
    <property type="term" value="C:cytoplasm"/>
    <property type="evidence" value="ECO:0007669"/>
    <property type="project" value="UniProtKB-SubCell"/>
</dbReference>
<dbReference type="GO" id="GO:0051301">
    <property type="term" value="P:cell division"/>
    <property type="evidence" value="ECO:0007669"/>
    <property type="project" value="UniProtKB-UniRule"/>
</dbReference>
<dbReference type="GO" id="GO:0008360">
    <property type="term" value="P:regulation of cell shape"/>
    <property type="evidence" value="ECO:0007669"/>
    <property type="project" value="UniProtKB-UniRule"/>
</dbReference>
<dbReference type="Gene3D" id="6.10.250.660">
    <property type="match status" value="1"/>
</dbReference>
<dbReference type="HAMAP" id="MF_02011">
    <property type="entry name" value="GpsB"/>
    <property type="match status" value="1"/>
</dbReference>
<dbReference type="InterPro" id="IPR011229">
    <property type="entry name" value="Cell_cycle_GpsB"/>
</dbReference>
<dbReference type="InterPro" id="IPR019933">
    <property type="entry name" value="DivIVA_domain"/>
</dbReference>
<dbReference type="InterPro" id="IPR007793">
    <property type="entry name" value="DivIVA_fam"/>
</dbReference>
<dbReference type="NCBIfam" id="TIGR03544">
    <property type="entry name" value="DivI1A_domain"/>
    <property type="match status" value="1"/>
</dbReference>
<dbReference type="NCBIfam" id="NF010725">
    <property type="entry name" value="PRK14127.1"/>
    <property type="match status" value="1"/>
</dbReference>
<dbReference type="PANTHER" id="PTHR35794:SF1">
    <property type="entry name" value="CELL CYCLE PROTEIN GPSB"/>
    <property type="match status" value="1"/>
</dbReference>
<dbReference type="PANTHER" id="PTHR35794">
    <property type="entry name" value="CELL DIVISION PROTEIN DIVIVA"/>
    <property type="match status" value="1"/>
</dbReference>
<dbReference type="Pfam" id="PF05103">
    <property type="entry name" value="DivIVA"/>
    <property type="match status" value="1"/>
</dbReference>
<dbReference type="PIRSF" id="PIRSF029938">
    <property type="entry name" value="UCP029938"/>
    <property type="match status" value="1"/>
</dbReference>
<feature type="chain" id="PRO_1000189493" description="Cell cycle protein GpsB">
    <location>
        <begin position="1"/>
        <end position="112"/>
    </location>
</feature>
<feature type="coiled-coil region" evidence="1">
    <location>
        <begin position="38"/>
        <end position="72"/>
    </location>
</feature>
<accession>B9IVT1</accession>
<reference key="1">
    <citation type="journal article" date="2009" name="J. Bacteriol.">
        <title>Complete genome sequence of the extremophilic Bacillus cereus strain Q1 with industrial applications.</title>
        <authorList>
            <person name="Xiong Z."/>
            <person name="Jiang Y."/>
            <person name="Qi D."/>
            <person name="Lu H."/>
            <person name="Yang F."/>
            <person name="Yang J."/>
            <person name="Chen L."/>
            <person name="Sun L."/>
            <person name="Xu X."/>
            <person name="Xue Y."/>
            <person name="Zhu Y."/>
            <person name="Jin Q."/>
        </authorList>
    </citation>
    <scope>NUCLEOTIDE SEQUENCE [LARGE SCALE GENOMIC DNA]</scope>
    <source>
        <strain>Q1</strain>
    </source>
</reference>
<name>GPSB_BACCQ</name>
<comment type="function">
    <text evidence="1">Divisome component that associates with the complex late in its assembly, after the Z-ring is formed, and is dependent on DivIC and PBP2B for its recruitment to the divisome. Together with EzrA, is a key component of the system that regulates PBP1 localization during cell cycle progression. Its main role could be the removal of PBP1 from the cell pole after pole maturation is completed. Also contributes to the recruitment of PBP1 to the division complex. Not essential for septum formation.</text>
</comment>
<comment type="subunit">
    <text evidence="1">Forms polymers through the coiled coil domains. Interacts with PBP1, MreC and EzrA.</text>
</comment>
<comment type="subcellular location">
    <subcellularLocation>
        <location evidence="1">Cytoplasm</location>
    </subcellularLocation>
    <text evidence="1">Shuttles between the lateral wall and the division site in a cell cycle-dependent manner.</text>
</comment>
<comment type="similarity">
    <text evidence="1">Belongs to the GpsB family.</text>
</comment>
<gene>
    <name evidence="1" type="primary">gpsB</name>
    <name type="ordered locus">BCQ_1628</name>
</gene>
<protein>
    <recommendedName>
        <fullName evidence="1">Cell cycle protein GpsB</fullName>
    </recommendedName>
    <alternativeName>
        <fullName evidence="1">Guiding PBP1-shuttling protein</fullName>
    </alternativeName>
</protein>
<proteinExistence type="inferred from homology"/>